<protein>
    <recommendedName>
        <fullName evidence="1">Ribosomal RNA small subunit methyltransferase G</fullName>
        <ecNumber evidence="1">2.1.1.170</ecNumber>
    </recommendedName>
    <alternativeName>
        <fullName evidence="1">16S rRNA 7-methylguanosine methyltransferase</fullName>
        <shortName evidence="1">16S rRNA m7G methyltransferase</shortName>
    </alternativeName>
</protein>
<proteinExistence type="inferred from homology"/>
<feature type="chain" id="PRO_1000118188" description="Ribosomal RNA small subunit methyltransferase G">
    <location>
        <begin position="1"/>
        <end position="207"/>
    </location>
</feature>
<feature type="binding site" evidence="1">
    <location>
        <position position="73"/>
    </location>
    <ligand>
        <name>S-adenosyl-L-methionine</name>
        <dbReference type="ChEBI" id="CHEBI:59789"/>
    </ligand>
</feature>
<feature type="binding site" evidence="1">
    <location>
        <position position="78"/>
    </location>
    <ligand>
        <name>S-adenosyl-L-methionine</name>
        <dbReference type="ChEBI" id="CHEBI:59789"/>
    </ligand>
</feature>
<feature type="binding site" evidence="1">
    <location>
        <begin position="124"/>
        <end position="125"/>
    </location>
    <ligand>
        <name>S-adenosyl-L-methionine</name>
        <dbReference type="ChEBI" id="CHEBI:59789"/>
    </ligand>
</feature>
<feature type="binding site" evidence="1">
    <location>
        <position position="139"/>
    </location>
    <ligand>
        <name>S-adenosyl-L-methionine</name>
        <dbReference type="ChEBI" id="CHEBI:59789"/>
    </ligand>
</feature>
<dbReference type="EC" id="2.1.1.170" evidence="1"/>
<dbReference type="EMBL" id="CU928162">
    <property type="protein sequence ID" value="CAR10550.2"/>
    <property type="molecule type" value="Genomic_DNA"/>
</dbReference>
<dbReference type="RefSeq" id="WP_000932839.1">
    <property type="nucleotide sequence ID" value="NC_011745.1"/>
</dbReference>
<dbReference type="SMR" id="B7N2H9"/>
<dbReference type="GeneID" id="93778227"/>
<dbReference type="KEGG" id="ecq:ECED1_4430"/>
<dbReference type="HOGENOM" id="CLU_065341_2_2_6"/>
<dbReference type="Proteomes" id="UP000000748">
    <property type="component" value="Chromosome"/>
</dbReference>
<dbReference type="GO" id="GO:0005829">
    <property type="term" value="C:cytosol"/>
    <property type="evidence" value="ECO:0007669"/>
    <property type="project" value="TreeGrafter"/>
</dbReference>
<dbReference type="GO" id="GO:0070043">
    <property type="term" value="F:rRNA (guanine-N7-)-methyltransferase activity"/>
    <property type="evidence" value="ECO:0007669"/>
    <property type="project" value="UniProtKB-UniRule"/>
</dbReference>
<dbReference type="CDD" id="cd02440">
    <property type="entry name" value="AdoMet_MTases"/>
    <property type="match status" value="1"/>
</dbReference>
<dbReference type="FunFam" id="3.40.50.150:FF:000032">
    <property type="entry name" value="Ribosomal RNA small subunit methyltransferase G"/>
    <property type="match status" value="1"/>
</dbReference>
<dbReference type="Gene3D" id="3.40.50.150">
    <property type="entry name" value="Vaccinia Virus protein VP39"/>
    <property type="match status" value="1"/>
</dbReference>
<dbReference type="HAMAP" id="MF_00074">
    <property type="entry name" value="16SrRNA_methyltr_G"/>
    <property type="match status" value="1"/>
</dbReference>
<dbReference type="InterPro" id="IPR003682">
    <property type="entry name" value="rRNA_ssu_MeTfrase_G"/>
</dbReference>
<dbReference type="InterPro" id="IPR029063">
    <property type="entry name" value="SAM-dependent_MTases_sf"/>
</dbReference>
<dbReference type="NCBIfam" id="TIGR00138">
    <property type="entry name" value="rsmG_gidB"/>
    <property type="match status" value="1"/>
</dbReference>
<dbReference type="PANTHER" id="PTHR31760">
    <property type="entry name" value="S-ADENOSYL-L-METHIONINE-DEPENDENT METHYLTRANSFERASES SUPERFAMILY PROTEIN"/>
    <property type="match status" value="1"/>
</dbReference>
<dbReference type="PANTHER" id="PTHR31760:SF0">
    <property type="entry name" value="S-ADENOSYL-L-METHIONINE-DEPENDENT METHYLTRANSFERASES SUPERFAMILY PROTEIN"/>
    <property type="match status" value="1"/>
</dbReference>
<dbReference type="Pfam" id="PF02527">
    <property type="entry name" value="GidB"/>
    <property type="match status" value="1"/>
</dbReference>
<dbReference type="PIRSF" id="PIRSF003078">
    <property type="entry name" value="GidB"/>
    <property type="match status" value="1"/>
</dbReference>
<dbReference type="SUPFAM" id="SSF53335">
    <property type="entry name" value="S-adenosyl-L-methionine-dependent methyltransferases"/>
    <property type="match status" value="1"/>
</dbReference>
<evidence type="ECO:0000255" key="1">
    <source>
        <dbReference type="HAMAP-Rule" id="MF_00074"/>
    </source>
</evidence>
<sequence length="207" mass="23431">MLNKLSLLLKDAGISLTDHQKNQLIAYVNMLHKWNKAYNLTSVRDPNEMLVRHILDSIVVAPYLQGERFIDVGTGPGLPGIPLSIVRPEAHFTLLDSLGKRVRFLRQVQHELKLENIEPVQSRVEEFPSEPPFDGVISRAFASLNDMVSWCHHLPGEQGRFYALKGQMPEDEIALLPEEYQVESVVKLQVPALDGERHLVVIKANKI</sequence>
<reference key="1">
    <citation type="journal article" date="2009" name="PLoS Genet.">
        <title>Organised genome dynamics in the Escherichia coli species results in highly diverse adaptive paths.</title>
        <authorList>
            <person name="Touchon M."/>
            <person name="Hoede C."/>
            <person name="Tenaillon O."/>
            <person name="Barbe V."/>
            <person name="Baeriswyl S."/>
            <person name="Bidet P."/>
            <person name="Bingen E."/>
            <person name="Bonacorsi S."/>
            <person name="Bouchier C."/>
            <person name="Bouvet O."/>
            <person name="Calteau A."/>
            <person name="Chiapello H."/>
            <person name="Clermont O."/>
            <person name="Cruveiller S."/>
            <person name="Danchin A."/>
            <person name="Diard M."/>
            <person name="Dossat C."/>
            <person name="Karoui M.E."/>
            <person name="Frapy E."/>
            <person name="Garry L."/>
            <person name="Ghigo J.M."/>
            <person name="Gilles A.M."/>
            <person name="Johnson J."/>
            <person name="Le Bouguenec C."/>
            <person name="Lescat M."/>
            <person name="Mangenot S."/>
            <person name="Martinez-Jehanne V."/>
            <person name="Matic I."/>
            <person name="Nassif X."/>
            <person name="Oztas S."/>
            <person name="Petit M.A."/>
            <person name="Pichon C."/>
            <person name="Rouy Z."/>
            <person name="Ruf C.S."/>
            <person name="Schneider D."/>
            <person name="Tourret J."/>
            <person name="Vacherie B."/>
            <person name="Vallenet D."/>
            <person name="Medigue C."/>
            <person name="Rocha E.P.C."/>
            <person name="Denamur E."/>
        </authorList>
    </citation>
    <scope>NUCLEOTIDE SEQUENCE [LARGE SCALE GENOMIC DNA]</scope>
    <source>
        <strain>ED1a</strain>
    </source>
</reference>
<name>RSMG_ECO81</name>
<comment type="function">
    <text evidence="1">Specifically methylates the N7 position of guanine in position 527 of 16S rRNA.</text>
</comment>
<comment type="catalytic activity">
    <reaction evidence="1">
        <text>guanosine(527) in 16S rRNA + S-adenosyl-L-methionine = N(7)-methylguanosine(527) in 16S rRNA + S-adenosyl-L-homocysteine</text>
        <dbReference type="Rhea" id="RHEA:42732"/>
        <dbReference type="Rhea" id="RHEA-COMP:10209"/>
        <dbReference type="Rhea" id="RHEA-COMP:10210"/>
        <dbReference type="ChEBI" id="CHEBI:57856"/>
        <dbReference type="ChEBI" id="CHEBI:59789"/>
        <dbReference type="ChEBI" id="CHEBI:74269"/>
        <dbReference type="ChEBI" id="CHEBI:74480"/>
        <dbReference type="EC" id="2.1.1.170"/>
    </reaction>
</comment>
<comment type="subcellular location">
    <subcellularLocation>
        <location evidence="1">Cytoplasm</location>
    </subcellularLocation>
</comment>
<comment type="similarity">
    <text evidence="1">Belongs to the methyltransferase superfamily. RNA methyltransferase RsmG family.</text>
</comment>
<keyword id="KW-0963">Cytoplasm</keyword>
<keyword id="KW-0489">Methyltransferase</keyword>
<keyword id="KW-0698">rRNA processing</keyword>
<keyword id="KW-0949">S-adenosyl-L-methionine</keyword>
<keyword id="KW-0808">Transferase</keyword>
<accession>B7N2H9</accession>
<gene>
    <name evidence="1" type="primary">rsmG</name>
    <name type="ordered locus">ECED1_4430</name>
</gene>
<organism>
    <name type="scientific">Escherichia coli O81 (strain ED1a)</name>
    <dbReference type="NCBI Taxonomy" id="585397"/>
    <lineage>
        <taxon>Bacteria</taxon>
        <taxon>Pseudomonadati</taxon>
        <taxon>Pseudomonadota</taxon>
        <taxon>Gammaproteobacteria</taxon>
        <taxon>Enterobacterales</taxon>
        <taxon>Enterobacteriaceae</taxon>
        <taxon>Escherichia</taxon>
    </lineage>
</organism>